<organism>
    <name type="scientific">Mesorhizobium japonicum (strain LMG 29417 / CECT 9101 / MAFF 303099)</name>
    <name type="common">Mesorhizobium loti (strain MAFF 303099)</name>
    <dbReference type="NCBI Taxonomy" id="266835"/>
    <lineage>
        <taxon>Bacteria</taxon>
        <taxon>Pseudomonadati</taxon>
        <taxon>Pseudomonadota</taxon>
        <taxon>Alphaproteobacteria</taxon>
        <taxon>Hyphomicrobiales</taxon>
        <taxon>Phyllobacteriaceae</taxon>
        <taxon>Mesorhizobium</taxon>
    </lineage>
</organism>
<protein>
    <recommendedName>
        <fullName evidence="1">Probable potassium transport system protein Kup 2</fullName>
    </recommendedName>
</protein>
<comment type="function">
    <text evidence="1">Transport of potassium into the cell. Likely operates as a K(+):H(+) symporter.</text>
</comment>
<comment type="catalytic activity">
    <reaction evidence="1">
        <text>K(+)(in) + H(+)(in) = K(+)(out) + H(+)(out)</text>
        <dbReference type="Rhea" id="RHEA:28490"/>
        <dbReference type="ChEBI" id="CHEBI:15378"/>
        <dbReference type="ChEBI" id="CHEBI:29103"/>
    </reaction>
    <physiologicalReaction direction="right-to-left" evidence="1">
        <dbReference type="Rhea" id="RHEA:28492"/>
    </physiologicalReaction>
</comment>
<comment type="subcellular location">
    <subcellularLocation>
        <location evidence="1">Cell inner membrane</location>
        <topology evidence="1">Multi-pass membrane protein</topology>
    </subcellularLocation>
</comment>
<comment type="similarity">
    <text evidence="1">Belongs to the HAK/KUP transporter (TC 2.A.72) family.</text>
</comment>
<name>KUP2_RHILO</name>
<accession>Q98KL7</accession>
<proteinExistence type="inferred from homology"/>
<keyword id="KW-0997">Cell inner membrane</keyword>
<keyword id="KW-1003">Cell membrane</keyword>
<keyword id="KW-0406">Ion transport</keyword>
<keyword id="KW-0472">Membrane</keyword>
<keyword id="KW-0630">Potassium</keyword>
<keyword id="KW-0633">Potassium transport</keyword>
<keyword id="KW-0769">Symport</keyword>
<keyword id="KW-0812">Transmembrane</keyword>
<keyword id="KW-1133">Transmembrane helix</keyword>
<keyword id="KW-0813">Transport</keyword>
<reference key="1">
    <citation type="journal article" date="2000" name="DNA Res.">
        <title>Complete genome structure of the nitrogen-fixing symbiotic bacterium Mesorhizobium loti.</title>
        <authorList>
            <person name="Kaneko T."/>
            <person name="Nakamura Y."/>
            <person name="Sato S."/>
            <person name="Asamizu E."/>
            <person name="Kato T."/>
            <person name="Sasamoto S."/>
            <person name="Watanabe A."/>
            <person name="Idesawa K."/>
            <person name="Ishikawa A."/>
            <person name="Kawashima K."/>
            <person name="Kimura T."/>
            <person name="Kishida Y."/>
            <person name="Kiyokawa C."/>
            <person name="Kohara M."/>
            <person name="Matsumoto M."/>
            <person name="Matsuno A."/>
            <person name="Mochizuki Y."/>
            <person name="Nakayama S."/>
            <person name="Nakazaki N."/>
            <person name="Shimpo S."/>
            <person name="Sugimoto M."/>
            <person name="Takeuchi C."/>
            <person name="Yamada M."/>
            <person name="Tabata S."/>
        </authorList>
    </citation>
    <scope>NUCLEOTIDE SEQUENCE [LARGE SCALE GENOMIC DNA]</scope>
    <source>
        <strain>LMG 29417 / CECT 9101 / MAFF 303099</strain>
    </source>
</reference>
<gene>
    <name evidence="1" type="primary">kup2</name>
    <name type="ordered locus">mll1417</name>
</gene>
<evidence type="ECO:0000255" key="1">
    <source>
        <dbReference type="HAMAP-Rule" id="MF_01522"/>
    </source>
</evidence>
<evidence type="ECO:0000256" key="2">
    <source>
        <dbReference type="SAM" id="MobiDB-lite"/>
    </source>
</evidence>
<sequence>MDLASRDSEAETVEQSSHSGAEQHSTKVLMLGALGVVYGDIGTSPIYAFREALHASPGIDTRAQVLGVLSLIVWALTIIVTIKYVAFVLRADNKGEGGTLSLMSLARTAYPKGARLILAIGLCGAALFFGDSIITPAISVLSAVEGLRVVTPTLDPYVVPITLLILAILFSVQRFGTGKVAAVFGPVTALWFLAIGVAGLYHLLDDPSILLAINPYYAVTYLASTPTAAFVTVGAVFLAVTGAEALYVDLGHFGRKPIVLAWFSVVFPCLLLNYFGQGAFVLANGGRPTNPFFQMLPDWALMPMVGLATAATVIASQAVISGAFSLTRQAVQLNLLPRIEVQHTSEMQLGQIYMPRINLLVALGVMLLVVGFGSSSSLASAYGISVTGEMLMTTILLFVVMRKLWKWRLAVALPLTLLFGIIDSGFFLANIVKIFEGGWVSITVACLMGLIMWTWIRGTRYLFDKTRRNEIPLDFLAANLLKKKPHLVPGTAVFLTSDPLSAPTALMHSLKHYKVLHEQNVILSVVTAPQPVVSDSDRVKMETVNDLFMRVTLTFGYMEQPNIPRALAICRKRGWKFDIMTTSFFLSRRSLKASPNSGMPVWQDRLFIGLARTAADATEYFQIPTGRVVEIGTQVAI</sequence>
<feature type="chain" id="PRO_0000209047" description="Probable potassium transport system protein Kup 2">
    <location>
        <begin position="1"/>
        <end position="637"/>
    </location>
</feature>
<feature type="transmembrane region" description="Helical" evidence="1">
    <location>
        <begin position="29"/>
        <end position="49"/>
    </location>
</feature>
<feature type="transmembrane region" description="Helical" evidence="1">
    <location>
        <begin position="68"/>
        <end position="88"/>
    </location>
</feature>
<feature type="transmembrane region" description="Helical" evidence="1">
    <location>
        <begin position="116"/>
        <end position="136"/>
    </location>
</feature>
<feature type="transmembrane region" description="Helical" evidence="1">
    <location>
        <begin position="150"/>
        <end position="170"/>
    </location>
</feature>
<feature type="transmembrane region" description="Helical" evidence="1">
    <location>
        <begin position="180"/>
        <end position="200"/>
    </location>
</feature>
<feature type="transmembrane region" description="Helical" evidence="1">
    <location>
        <begin position="228"/>
        <end position="248"/>
    </location>
</feature>
<feature type="transmembrane region" description="Helical" evidence="1">
    <location>
        <begin position="258"/>
        <end position="278"/>
    </location>
</feature>
<feature type="transmembrane region" description="Helical" evidence="1">
    <location>
        <begin position="300"/>
        <end position="320"/>
    </location>
</feature>
<feature type="transmembrane region" description="Helical" evidence="1">
    <location>
        <begin position="359"/>
        <end position="379"/>
    </location>
</feature>
<feature type="transmembrane region" description="Helical" evidence="1">
    <location>
        <begin position="381"/>
        <end position="401"/>
    </location>
</feature>
<feature type="transmembrane region" description="Helical" evidence="1">
    <location>
        <begin position="409"/>
        <end position="429"/>
    </location>
</feature>
<feature type="transmembrane region" description="Helical" evidence="1">
    <location>
        <begin position="434"/>
        <end position="454"/>
    </location>
</feature>
<feature type="region of interest" description="Disordered" evidence="2">
    <location>
        <begin position="1"/>
        <end position="21"/>
    </location>
</feature>
<dbReference type="EMBL" id="BA000012">
    <property type="protein sequence ID" value="BAB48797.1"/>
    <property type="molecule type" value="Genomic_DNA"/>
</dbReference>
<dbReference type="RefSeq" id="WP_010910150.1">
    <property type="nucleotide sequence ID" value="NC_002678.2"/>
</dbReference>
<dbReference type="KEGG" id="mlo:mll1417"/>
<dbReference type="PATRIC" id="fig|266835.9.peg.1144"/>
<dbReference type="eggNOG" id="COG3158">
    <property type="taxonomic scope" value="Bacteria"/>
</dbReference>
<dbReference type="HOGENOM" id="CLU_008142_4_2_5"/>
<dbReference type="Proteomes" id="UP000000552">
    <property type="component" value="Chromosome"/>
</dbReference>
<dbReference type="GO" id="GO:0005886">
    <property type="term" value="C:plasma membrane"/>
    <property type="evidence" value="ECO:0007669"/>
    <property type="project" value="UniProtKB-SubCell"/>
</dbReference>
<dbReference type="GO" id="GO:0015079">
    <property type="term" value="F:potassium ion transmembrane transporter activity"/>
    <property type="evidence" value="ECO:0007669"/>
    <property type="project" value="UniProtKB-UniRule"/>
</dbReference>
<dbReference type="GO" id="GO:0015293">
    <property type="term" value="F:symporter activity"/>
    <property type="evidence" value="ECO:0007669"/>
    <property type="project" value="UniProtKB-UniRule"/>
</dbReference>
<dbReference type="HAMAP" id="MF_01522">
    <property type="entry name" value="Kup"/>
    <property type="match status" value="1"/>
</dbReference>
<dbReference type="InterPro" id="IPR003855">
    <property type="entry name" value="K+_transporter"/>
</dbReference>
<dbReference type="InterPro" id="IPR053952">
    <property type="entry name" value="K_trans_C"/>
</dbReference>
<dbReference type="InterPro" id="IPR053951">
    <property type="entry name" value="K_trans_N"/>
</dbReference>
<dbReference type="InterPro" id="IPR023051">
    <property type="entry name" value="Kup"/>
</dbReference>
<dbReference type="PANTHER" id="PTHR30540:SF79">
    <property type="entry name" value="LOW AFFINITY POTASSIUM TRANSPORT SYSTEM PROTEIN KUP"/>
    <property type="match status" value="1"/>
</dbReference>
<dbReference type="PANTHER" id="PTHR30540">
    <property type="entry name" value="OSMOTIC STRESS POTASSIUM TRANSPORTER"/>
    <property type="match status" value="1"/>
</dbReference>
<dbReference type="Pfam" id="PF02705">
    <property type="entry name" value="K_trans"/>
    <property type="match status" value="1"/>
</dbReference>
<dbReference type="Pfam" id="PF22776">
    <property type="entry name" value="K_trans_C"/>
    <property type="match status" value="1"/>
</dbReference>